<name>GLYA_LIGS1</name>
<dbReference type="EC" id="2.1.2.1" evidence="1"/>
<dbReference type="EMBL" id="CP000233">
    <property type="protein sequence ID" value="ABD99688.1"/>
    <property type="molecule type" value="Genomic_DNA"/>
</dbReference>
<dbReference type="RefSeq" id="WP_011476014.1">
    <property type="nucleotide sequence ID" value="NC_007929.1"/>
</dbReference>
<dbReference type="RefSeq" id="YP_535771.1">
    <property type="nucleotide sequence ID" value="NC_007929.1"/>
</dbReference>
<dbReference type="SMR" id="Q1WTR3"/>
<dbReference type="STRING" id="362948.LSL_0878"/>
<dbReference type="KEGG" id="lsl:LSL_0878"/>
<dbReference type="PATRIC" id="fig|362948.14.peg.953"/>
<dbReference type="HOGENOM" id="CLU_022477_2_1_9"/>
<dbReference type="OrthoDB" id="9803846at2"/>
<dbReference type="UniPathway" id="UPA00193"/>
<dbReference type="UniPathway" id="UPA00288">
    <property type="reaction ID" value="UER01023"/>
</dbReference>
<dbReference type="Proteomes" id="UP000006559">
    <property type="component" value="Chromosome"/>
</dbReference>
<dbReference type="GO" id="GO:0005829">
    <property type="term" value="C:cytosol"/>
    <property type="evidence" value="ECO:0007669"/>
    <property type="project" value="TreeGrafter"/>
</dbReference>
<dbReference type="GO" id="GO:0004372">
    <property type="term" value="F:glycine hydroxymethyltransferase activity"/>
    <property type="evidence" value="ECO:0007669"/>
    <property type="project" value="UniProtKB-UniRule"/>
</dbReference>
<dbReference type="GO" id="GO:0030170">
    <property type="term" value="F:pyridoxal phosphate binding"/>
    <property type="evidence" value="ECO:0007669"/>
    <property type="project" value="UniProtKB-UniRule"/>
</dbReference>
<dbReference type="GO" id="GO:0019264">
    <property type="term" value="P:glycine biosynthetic process from serine"/>
    <property type="evidence" value="ECO:0007669"/>
    <property type="project" value="UniProtKB-UniRule"/>
</dbReference>
<dbReference type="GO" id="GO:0035999">
    <property type="term" value="P:tetrahydrofolate interconversion"/>
    <property type="evidence" value="ECO:0007669"/>
    <property type="project" value="UniProtKB-UniRule"/>
</dbReference>
<dbReference type="CDD" id="cd00378">
    <property type="entry name" value="SHMT"/>
    <property type="match status" value="1"/>
</dbReference>
<dbReference type="FunFam" id="3.40.640.10:FF:000001">
    <property type="entry name" value="Serine hydroxymethyltransferase"/>
    <property type="match status" value="1"/>
</dbReference>
<dbReference type="Gene3D" id="3.90.1150.10">
    <property type="entry name" value="Aspartate Aminotransferase, domain 1"/>
    <property type="match status" value="1"/>
</dbReference>
<dbReference type="Gene3D" id="3.40.640.10">
    <property type="entry name" value="Type I PLP-dependent aspartate aminotransferase-like (Major domain)"/>
    <property type="match status" value="1"/>
</dbReference>
<dbReference type="HAMAP" id="MF_00051">
    <property type="entry name" value="SHMT"/>
    <property type="match status" value="1"/>
</dbReference>
<dbReference type="InterPro" id="IPR015424">
    <property type="entry name" value="PyrdxlP-dep_Trfase"/>
</dbReference>
<dbReference type="InterPro" id="IPR015421">
    <property type="entry name" value="PyrdxlP-dep_Trfase_major"/>
</dbReference>
<dbReference type="InterPro" id="IPR015422">
    <property type="entry name" value="PyrdxlP-dep_Trfase_small"/>
</dbReference>
<dbReference type="InterPro" id="IPR001085">
    <property type="entry name" value="Ser_HO-MeTrfase"/>
</dbReference>
<dbReference type="InterPro" id="IPR049943">
    <property type="entry name" value="Ser_HO-MeTrfase-like"/>
</dbReference>
<dbReference type="InterPro" id="IPR019798">
    <property type="entry name" value="Ser_HO-MeTrfase_PLP_BS"/>
</dbReference>
<dbReference type="InterPro" id="IPR039429">
    <property type="entry name" value="SHMT-like_dom"/>
</dbReference>
<dbReference type="NCBIfam" id="NF000586">
    <property type="entry name" value="PRK00011.1"/>
    <property type="match status" value="1"/>
</dbReference>
<dbReference type="PANTHER" id="PTHR11680">
    <property type="entry name" value="SERINE HYDROXYMETHYLTRANSFERASE"/>
    <property type="match status" value="1"/>
</dbReference>
<dbReference type="PANTHER" id="PTHR11680:SF35">
    <property type="entry name" value="SERINE HYDROXYMETHYLTRANSFERASE 1"/>
    <property type="match status" value="1"/>
</dbReference>
<dbReference type="Pfam" id="PF00464">
    <property type="entry name" value="SHMT"/>
    <property type="match status" value="1"/>
</dbReference>
<dbReference type="PIRSF" id="PIRSF000412">
    <property type="entry name" value="SHMT"/>
    <property type="match status" value="1"/>
</dbReference>
<dbReference type="SUPFAM" id="SSF53383">
    <property type="entry name" value="PLP-dependent transferases"/>
    <property type="match status" value="1"/>
</dbReference>
<dbReference type="PROSITE" id="PS00096">
    <property type="entry name" value="SHMT"/>
    <property type="match status" value="1"/>
</dbReference>
<comment type="function">
    <text evidence="1">Catalyzes the reversible interconversion of serine and glycine with tetrahydrofolate (THF) serving as the one-carbon carrier. This reaction serves as the major source of one-carbon groups required for the biosynthesis of purines, thymidylate, methionine, and other important biomolecules. Also exhibits THF-independent aldolase activity toward beta-hydroxyamino acids, producing glycine and aldehydes, via a retro-aldol mechanism.</text>
</comment>
<comment type="catalytic activity">
    <reaction evidence="1">
        <text>(6R)-5,10-methylene-5,6,7,8-tetrahydrofolate + glycine + H2O = (6S)-5,6,7,8-tetrahydrofolate + L-serine</text>
        <dbReference type="Rhea" id="RHEA:15481"/>
        <dbReference type="ChEBI" id="CHEBI:15377"/>
        <dbReference type="ChEBI" id="CHEBI:15636"/>
        <dbReference type="ChEBI" id="CHEBI:33384"/>
        <dbReference type="ChEBI" id="CHEBI:57305"/>
        <dbReference type="ChEBI" id="CHEBI:57453"/>
        <dbReference type="EC" id="2.1.2.1"/>
    </reaction>
</comment>
<comment type="cofactor">
    <cofactor evidence="1">
        <name>pyridoxal 5'-phosphate</name>
        <dbReference type="ChEBI" id="CHEBI:597326"/>
    </cofactor>
</comment>
<comment type="pathway">
    <text evidence="1">One-carbon metabolism; tetrahydrofolate interconversion.</text>
</comment>
<comment type="pathway">
    <text evidence="1">Amino-acid biosynthesis; glycine biosynthesis; glycine from L-serine: step 1/1.</text>
</comment>
<comment type="subunit">
    <text evidence="1">Homodimer.</text>
</comment>
<comment type="subcellular location">
    <subcellularLocation>
        <location evidence="1">Cytoplasm</location>
    </subcellularLocation>
</comment>
<comment type="similarity">
    <text evidence="1">Belongs to the SHMT family.</text>
</comment>
<protein>
    <recommendedName>
        <fullName evidence="1">Serine hydroxymethyltransferase</fullName>
        <shortName evidence="1">SHMT</shortName>
        <shortName evidence="1">Serine methylase</shortName>
        <ecNumber evidence="1">2.1.2.1</ecNumber>
    </recommendedName>
</protein>
<keyword id="KW-0028">Amino-acid biosynthesis</keyword>
<keyword id="KW-0963">Cytoplasm</keyword>
<keyword id="KW-0554">One-carbon metabolism</keyword>
<keyword id="KW-0663">Pyridoxal phosphate</keyword>
<keyword id="KW-1185">Reference proteome</keyword>
<keyword id="KW-0808">Transferase</keyword>
<feature type="chain" id="PRO_1000006273" description="Serine hydroxymethyltransferase">
    <location>
        <begin position="1"/>
        <end position="417"/>
    </location>
</feature>
<feature type="binding site" evidence="1">
    <location>
        <position position="116"/>
    </location>
    <ligand>
        <name>(6S)-5,6,7,8-tetrahydrofolate</name>
        <dbReference type="ChEBI" id="CHEBI:57453"/>
    </ligand>
</feature>
<feature type="binding site" evidence="1">
    <location>
        <begin position="120"/>
        <end position="122"/>
    </location>
    <ligand>
        <name>(6S)-5,6,7,8-tetrahydrofolate</name>
        <dbReference type="ChEBI" id="CHEBI:57453"/>
    </ligand>
</feature>
<feature type="binding site" evidence="1">
    <location>
        <begin position="350"/>
        <end position="352"/>
    </location>
    <ligand>
        <name>(6S)-5,6,7,8-tetrahydrofolate</name>
        <dbReference type="ChEBI" id="CHEBI:57453"/>
    </ligand>
</feature>
<feature type="site" description="Plays an important role in substrate specificity" evidence="1">
    <location>
        <position position="224"/>
    </location>
</feature>
<feature type="modified residue" description="N6-(pyridoxal phosphate)lysine" evidence="1">
    <location>
        <position position="225"/>
    </location>
</feature>
<evidence type="ECO:0000255" key="1">
    <source>
        <dbReference type="HAMAP-Rule" id="MF_00051"/>
    </source>
</evidence>
<organism>
    <name type="scientific">Ligilactobacillus salivarius (strain UCC118)</name>
    <name type="common">Lactobacillus salivarius</name>
    <dbReference type="NCBI Taxonomy" id="362948"/>
    <lineage>
        <taxon>Bacteria</taxon>
        <taxon>Bacillati</taxon>
        <taxon>Bacillota</taxon>
        <taxon>Bacilli</taxon>
        <taxon>Lactobacillales</taxon>
        <taxon>Lactobacillaceae</taxon>
        <taxon>Ligilactobacillus</taxon>
    </lineage>
</organism>
<accession>Q1WTR3</accession>
<reference key="1">
    <citation type="journal article" date="2006" name="Proc. Natl. Acad. Sci. U.S.A.">
        <title>Multireplicon genome architecture of Lactobacillus salivarius.</title>
        <authorList>
            <person name="Claesson M.J."/>
            <person name="Li Y."/>
            <person name="Leahy S."/>
            <person name="Canchaya C."/>
            <person name="van Pijkeren J.P."/>
            <person name="Cerdeno-Tarraga A.M."/>
            <person name="Parkhill J."/>
            <person name="Flynn S."/>
            <person name="O'Sullivan G.C."/>
            <person name="Collins J.K."/>
            <person name="Higgins D."/>
            <person name="Shanahan F."/>
            <person name="Fitzgerald G.F."/>
            <person name="van Sinderen D."/>
            <person name="O'Toole P.W."/>
        </authorList>
    </citation>
    <scope>NUCLEOTIDE SEQUENCE [LARGE SCALE GENOMIC DNA]</scope>
    <source>
        <strain>UCC118</strain>
    </source>
</reference>
<gene>
    <name evidence="1" type="primary">glyA</name>
    <name type="ordered locus">LSL_0878</name>
</gene>
<proteinExistence type="inferred from homology"/>
<sequence>MDFKKLDPELWQAIANEEQRQQNNIELIASENIVSKNVLDAQGSVLTNKYAEGYPGRRYYGGCQFIDVVENLAIDRAKQLFGAKYVNVQPHSGSQANAAAYMSLVEPGDTIMGMDLAAGGHLTHGSPVNFSGKTYNFVSYGVDKKTEMLDYDEIARLAREHQPKLIVAGASAYSRIIDFSKFREIADEVGAKLMVDMAHIAGLVAVGLHPNPVPYADITTTTTHKTLRGPRGGMILTNDENLAKKINSNVFPGTQGGPLEHVIAGKAAAFGEALTPEFKEYGEQIIRNTQEMALCFADNEKARLVSNGSDNHLLLLDVRNFGLNGKEAEKLLDQVNITVNKNSIPFETLSPFKTSGIRIGTPAITSRGFNEEDSYQVAKLILTVLANKDDEQVLADVKRQVKELTDAHPIYAEYSIR</sequence>